<sequence>MYFLHGTPQRIQLSSRAIQICRIPKVSFFVVLTETEILIYQIRPLTLISKITKSQNLFERHGKNKKIAVNSEYGIIAVATEKNYVAVYHFTLNASKPVLTPSPYLTRYDDGPGEIFGPIKCEIQYKLAMRYGGGLKCLEIQRDSIVYAADSAPIIQVSTLETTDPNKLWKVSSKQYDLREVTWFLDHSSLISRLYFDVKIDTFFWMSTDGRVYANIGVSSNTNTKSLFGLCVHNPVDLNKSDNDKDINEDLESKLREKKATVLSTNARFSLLYVGTADGTVYAYEIRDFGRQYVQTHSFKYSASSGKVNHIATTGDGHQVMVGYDDGWATLSPYLNLCCASSETEYFNFGLSCGFWDRDSSSFYGLGSKNFSSTGEAEGTGLSTPIIAESLKENDEFFAMEKENVDIQYLSQNDNTNDVLYSITDSKQFISTIYILPFLKSTIVSSVQSTLQVCGAQTSDRLYISKSYEFCSSVKNNFGIDFWDQVEYPQPYVASEWPIRYVSIKDDGSLIAIAGLHGLAIYVCSKKTWFLYKDANMEQLISVTCPMIWCSQFLLAGVVCESNFELHLYKAKGPLDDRENLAKLSFTSTIVTMSVCDEYSLVVYTADNFLHHIRFDINELGRLELDYLTSVNFAPIFTTPSRVRSITLLLPKDLANIQPSDLLFYAVLLVLINGKLVLLSLKKQHSKELLYQCSMLAGDVEFYFINGSQEIPSLFHSIWIMTGKGLKLWLSFSEILSSVLINTKNLIDGLPKFLNTSKRVSLENFHRLSVEDLRSPSFVYKNGVDCNFDNTHLAKLIKNVNISEKFQKECIDLESQGCLLTVLSNYGLLLTAYTQGHKNLVNKMEYAHIQIGVYPFLPEIVRALLLLDKREQAIDLVKTYGHLHYINFVLEKLLSSSLLTYNSSQRDKLLYEVSLLFKDLQEFTTFKIVLGCLRKTEAEYWPMIFKYFGEPKDLMKKCLETEDVKSAAECLIIWQIHQGSASCASTFLSIYEMALKIKNWDVCTELSSYLVSLDPEKRLLKTALELLDEGPDSKDIRLYDQFNNLMKEVDKY</sequence>
<protein>
    <recommendedName>
        <fullName evidence="5">Guanine nucleotide exchange factor subunit ric1</fullName>
    </recommendedName>
    <alternativeName>
        <fullName evidence="2">Protein ric1</fullName>
    </alternativeName>
</protein>
<name>RIC1_SCHPO</name>
<evidence type="ECO:0000250" key="1"/>
<evidence type="ECO:0000250" key="2">
    <source>
        <dbReference type="UniProtKB" id="P40395"/>
    </source>
</evidence>
<evidence type="ECO:0000255" key="3"/>
<evidence type="ECO:0000269" key="4">
    <source>
    </source>
</evidence>
<evidence type="ECO:0000305" key="5"/>
<accession>O42656</accession>
<accession>Q9US18</accession>
<gene>
    <name type="primary">ric1</name>
    <name type="ORF">SPAC1851.04c</name>
    <name type="ORF">SPAC27D7.01c</name>
</gene>
<keyword id="KW-0333">Golgi apparatus</keyword>
<keyword id="KW-0472">Membrane</keyword>
<keyword id="KW-0597">Phosphoprotein</keyword>
<keyword id="KW-1185">Reference proteome</keyword>
<keyword id="KW-0812">Transmembrane</keyword>
<keyword id="KW-1133">Transmembrane helix</keyword>
<reference key="1">
    <citation type="journal article" date="2002" name="Nature">
        <title>The genome sequence of Schizosaccharomyces pombe.</title>
        <authorList>
            <person name="Wood V."/>
            <person name="Gwilliam R."/>
            <person name="Rajandream M.A."/>
            <person name="Lyne M.H."/>
            <person name="Lyne R."/>
            <person name="Stewart A."/>
            <person name="Sgouros J.G."/>
            <person name="Peat N."/>
            <person name="Hayles J."/>
            <person name="Baker S.G."/>
            <person name="Basham D."/>
            <person name="Bowman S."/>
            <person name="Brooks K."/>
            <person name="Brown D."/>
            <person name="Brown S."/>
            <person name="Chillingworth T."/>
            <person name="Churcher C.M."/>
            <person name="Collins M."/>
            <person name="Connor R."/>
            <person name="Cronin A."/>
            <person name="Davis P."/>
            <person name="Feltwell T."/>
            <person name="Fraser A."/>
            <person name="Gentles S."/>
            <person name="Goble A."/>
            <person name="Hamlin N."/>
            <person name="Harris D.E."/>
            <person name="Hidalgo J."/>
            <person name="Hodgson G."/>
            <person name="Holroyd S."/>
            <person name="Hornsby T."/>
            <person name="Howarth S."/>
            <person name="Huckle E.J."/>
            <person name="Hunt S."/>
            <person name="Jagels K."/>
            <person name="James K.D."/>
            <person name="Jones L."/>
            <person name="Jones M."/>
            <person name="Leather S."/>
            <person name="McDonald S."/>
            <person name="McLean J."/>
            <person name="Mooney P."/>
            <person name="Moule S."/>
            <person name="Mungall K.L."/>
            <person name="Murphy L.D."/>
            <person name="Niblett D."/>
            <person name="Odell C."/>
            <person name="Oliver K."/>
            <person name="O'Neil S."/>
            <person name="Pearson D."/>
            <person name="Quail M.A."/>
            <person name="Rabbinowitsch E."/>
            <person name="Rutherford K.M."/>
            <person name="Rutter S."/>
            <person name="Saunders D."/>
            <person name="Seeger K."/>
            <person name="Sharp S."/>
            <person name="Skelton J."/>
            <person name="Simmonds M.N."/>
            <person name="Squares R."/>
            <person name="Squares S."/>
            <person name="Stevens K."/>
            <person name="Taylor K."/>
            <person name="Taylor R.G."/>
            <person name="Tivey A."/>
            <person name="Walsh S.V."/>
            <person name="Warren T."/>
            <person name="Whitehead S."/>
            <person name="Woodward J.R."/>
            <person name="Volckaert G."/>
            <person name="Aert R."/>
            <person name="Robben J."/>
            <person name="Grymonprez B."/>
            <person name="Weltjens I."/>
            <person name="Vanstreels E."/>
            <person name="Rieger M."/>
            <person name="Schaefer M."/>
            <person name="Mueller-Auer S."/>
            <person name="Gabel C."/>
            <person name="Fuchs M."/>
            <person name="Duesterhoeft A."/>
            <person name="Fritzc C."/>
            <person name="Holzer E."/>
            <person name="Moestl D."/>
            <person name="Hilbert H."/>
            <person name="Borzym K."/>
            <person name="Langer I."/>
            <person name="Beck A."/>
            <person name="Lehrach H."/>
            <person name="Reinhardt R."/>
            <person name="Pohl T.M."/>
            <person name="Eger P."/>
            <person name="Zimmermann W."/>
            <person name="Wedler H."/>
            <person name="Wambutt R."/>
            <person name="Purnelle B."/>
            <person name="Goffeau A."/>
            <person name="Cadieu E."/>
            <person name="Dreano S."/>
            <person name="Gloux S."/>
            <person name="Lelaure V."/>
            <person name="Mottier S."/>
            <person name="Galibert F."/>
            <person name="Aves S.J."/>
            <person name="Xiang Z."/>
            <person name="Hunt C."/>
            <person name="Moore K."/>
            <person name="Hurst S.M."/>
            <person name="Lucas M."/>
            <person name="Rochet M."/>
            <person name="Gaillardin C."/>
            <person name="Tallada V.A."/>
            <person name="Garzon A."/>
            <person name="Thode G."/>
            <person name="Daga R.R."/>
            <person name="Cruzado L."/>
            <person name="Jimenez J."/>
            <person name="Sanchez M."/>
            <person name="del Rey F."/>
            <person name="Benito J."/>
            <person name="Dominguez A."/>
            <person name="Revuelta J.L."/>
            <person name="Moreno S."/>
            <person name="Armstrong J."/>
            <person name="Forsburg S.L."/>
            <person name="Cerutti L."/>
            <person name="Lowe T."/>
            <person name="McCombie W.R."/>
            <person name="Paulsen I."/>
            <person name="Potashkin J."/>
            <person name="Shpakovski G.V."/>
            <person name="Ussery D."/>
            <person name="Barrell B.G."/>
            <person name="Nurse P."/>
        </authorList>
    </citation>
    <scope>NUCLEOTIDE SEQUENCE [LARGE SCALE GENOMIC DNA]</scope>
    <source>
        <strain>972 / ATCC 24843</strain>
    </source>
</reference>
<reference key="2">
    <citation type="journal article" date="2008" name="J. Proteome Res.">
        <title>Phosphoproteome analysis of fission yeast.</title>
        <authorList>
            <person name="Wilson-Grady J.T."/>
            <person name="Villen J."/>
            <person name="Gygi S.P."/>
        </authorList>
    </citation>
    <scope>PHOSPHORYLATION [LARGE SCALE ANALYSIS] AT TYR-293</scope>
    <scope>IDENTIFICATION BY MASS SPECTROMETRY</scope>
</reference>
<dbReference type="EMBL" id="CU329670">
    <property type="protein sequence ID" value="CAB62430.2"/>
    <property type="molecule type" value="Genomic_DNA"/>
</dbReference>
<dbReference type="PIR" id="T50127">
    <property type="entry name" value="T50127"/>
</dbReference>
<dbReference type="RefSeq" id="NP_594607.2">
    <property type="nucleotide sequence ID" value="NM_001020035.2"/>
</dbReference>
<dbReference type="BioGRID" id="278968">
    <property type="interactions" value="5"/>
</dbReference>
<dbReference type="FunCoup" id="O42656">
    <property type="interactions" value="144"/>
</dbReference>
<dbReference type="STRING" id="284812.O42656"/>
<dbReference type="iPTMnet" id="O42656"/>
<dbReference type="PaxDb" id="4896-SPAC1851.04c.1"/>
<dbReference type="EnsemblFungi" id="SPAC1851.04c.1">
    <property type="protein sequence ID" value="SPAC1851.04c.1:pep"/>
    <property type="gene ID" value="SPAC1851.04c"/>
</dbReference>
<dbReference type="GeneID" id="2542510"/>
<dbReference type="KEGG" id="spo:2542510"/>
<dbReference type="PomBase" id="SPAC1851.04c">
    <property type="gene designation" value="ric1"/>
</dbReference>
<dbReference type="VEuPathDB" id="FungiDB:SPAC1851.04c"/>
<dbReference type="eggNOG" id="KOG2006">
    <property type="taxonomic scope" value="Eukaryota"/>
</dbReference>
<dbReference type="HOGENOM" id="CLU_002060_1_0_1"/>
<dbReference type="InParanoid" id="O42656"/>
<dbReference type="OMA" id="MVYDRAM"/>
<dbReference type="PhylomeDB" id="O42656"/>
<dbReference type="Reactome" id="R-SPO-6811440">
    <property type="pathway name" value="Retrograde transport at the Trans-Golgi-Network"/>
</dbReference>
<dbReference type="Reactome" id="R-SPO-8876198">
    <property type="pathway name" value="RAB GEFs exchange GTP for GDP on RABs"/>
</dbReference>
<dbReference type="PRO" id="PR:O42656"/>
<dbReference type="Proteomes" id="UP000002485">
    <property type="component" value="Chromosome I"/>
</dbReference>
<dbReference type="GO" id="GO:0005829">
    <property type="term" value="C:cytosol"/>
    <property type="evidence" value="ECO:0007005"/>
    <property type="project" value="PomBase"/>
</dbReference>
<dbReference type="GO" id="GO:0000139">
    <property type="term" value="C:Golgi membrane"/>
    <property type="evidence" value="ECO:0000318"/>
    <property type="project" value="GO_Central"/>
</dbReference>
<dbReference type="GO" id="GO:0034066">
    <property type="term" value="C:Ric1-Rgp1 guanyl-nucleotide exchange factor complex"/>
    <property type="evidence" value="ECO:0000269"/>
    <property type="project" value="PomBase"/>
</dbReference>
<dbReference type="GO" id="GO:0006886">
    <property type="term" value="P:intracellular protein transport"/>
    <property type="evidence" value="ECO:0000318"/>
    <property type="project" value="GO_Central"/>
</dbReference>
<dbReference type="GO" id="GO:1904515">
    <property type="term" value="P:positive regulation of TORC2 signaling"/>
    <property type="evidence" value="ECO:0000315"/>
    <property type="project" value="PomBase"/>
</dbReference>
<dbReference type="GO" id="GO:0042147">
    <property type="term" value="P:retrograde transport, endosome to Golgi"/>
    <property type="evidence" value="ECO:0000318"/>
    <property type="project" value="GO_Central"/>
</dbReference>
<dbReference type="Gene3D" id="2.130.10.10">
    <property type="entry name" value="YVTN repeat-like/Quinoprotein amine dehydrogenase"/>
    <property type="match status" value="1"/>
</dbReference>
<dbReference type="InterPro" id="IPR040096">
    <property type="entry name" value="Ric1"/>
</dbReference>
<dbReference type="InterPro" id="IPR009771">
    <property type="entry name" value="RIC1_C"/>
</dbReference>
<dbReference type="InterPro" id="IPR015943">
    <property type="entry name" value="WD40/YVTN_repeat-like_dom_sf"/>
</dbReference>
<dbReference type="InterPro" id="IPR036322">
    <property type="entry name" value="WD40_repeat_dom_sf"/>
</dbReference>
<dbReference type="PANTHER" id="PTHR22746:SF10">
    <property type="entry name" value="GUANINE NUCLEOTIDE EXCHANGE FACTOR SUBUNIT RIC1"/>
    <property type="match status" value="1"/>
</dbReference>
<dbReference type="PANTHER" id="PTHR22746">
    <property type="entry name" value="RAB6A-GEF COMPLEX PARTNER PROTEIN 1"/>
    <property type="match status" value="1"/>
</dbReference>
<dbReference type="Pfam" id="PF25440">
    <property type="entry name" value="Beta-prop_RIC1_2nd"/>
    <property type="match status" value="1"/>
</dbReference>
<dbReference type="Pfam" id="PF07064">
    <property type="entry name" value="RIC1"/>
    <property type="match status" value="1"/>
</dbReference>
<dbReference type="SUPFAM" id="SSF50978">
    <property type="entry name" value="WD40 repeat-like"/>
    <property type="match status" value="2"/>
</dbReference>
<comment type="function">
    <text evidence="2">Probable component of a guanine nucleotide exchange factor (GEF) that may be required for efficient fusion of endosome-derived vesicles with the Golgi.</text>
</comment>
<comment type="subunit">
    <text evidence="2">Component of a guanine nucleotide exchange factor (GEF) complex.</text>
</comment>
<comment type="subcellular location">
    <subcellularLocation>
        <location evidence="1">Golgi apparatus membrane</location>
        <topology evidence="1">Single-pass membrane protein</topology>
    </subcellularLocation>
</comment>
<comment type="similarity">
    <text evidence="5">Belongs to the RIC1 family.</text>
</comment>
<proteinExistence type="evidence at protein level"/>
<feature type="chain" id="PRO_0000116843" description="Guanine nucleotide exchange factor subunit ric1">
    <location>
        <begin position="1"/>
        <end position="1052"/>
    </location>
</feature>
<feature type="transmembrane region" description="Helical" evidence="3">
    <location>
        <begin position="661"/>
        <end position="681"/>
    </location>
</feature>
<feature type="modified residue" description="Phosphotyrosine" evidence="4">
    <location>
        <position position="293"/>
    </location>
</feature>
<organism>
    <name type="scientific">Schizosaccharomyces pombe (strain 972 / ATCC 24843)</name>
    <name type="common">Fission yeast</name>
    <dbReference type="NCBI Taxonomy" id="284812"/>
    <lineage>
        <taxon>Eukaryota</taxon>
        <taxon>Fungi</taxon>
        <taxon>Dikarya</taxon>
        <taxon>Ascomycota</taxon>
        <taxon>Taphrinomycotina</taxon>
        <taxon>Schizosaccharomycetes</taxon>
        <taxon>Schizosaccharomycetales</taxon>
        <taxon>Schizosaccharomycetaceae</taxon>
        <taxon>Schizosaccharomyces</taxon>
    </lineage>
</organism>